<keyword id="KW-0002">3D-structure</keyword>
<keyword id="KW-0507">mRNA processing</keyword>
<keyword id="KW-0539">Nucleus</keyword>
<keyword id="KW-0597">Phosphoprotein</keyword>
<keyword id="KW-1267">Proteomics identification</keyword>
<keyword id="KW-1185">Reference proteome</keyword>
<keyword id="KW-0694">RNA-binding</keyword>
<evidence type="ECO:0000250" key="1">
    <source>
        <dbReference type="UniProtKB" id="O35218"/>
    </source>
</evidence>
<evidence type="ECO:0000256" key="2">
    <source>
        <dbReference type="SAM" id="MobiDB-lite"/>
    </source>
</evidence>
<evidence type="ECO:0000269" key="3">
    <source>
    </source>
</evidence>
<evidence type="ECO:0000269" key="4">
    <source>
    </source>
</evidence>
<evidence type="ECO:0000269" key="5">
    <source>
    </source>
</evidence>
<evidence type="ECO:0000305" key="6"/>
<evidence type="ECO:0007744" key="7">
    <source>
    </source>
</evidence>
<evidence type="ECO:0007744" key="8">
    <source>
    </source>
</evidence>
<evidence type="ECO:0007744" key="9">
    <source>
    </source>
</evidence>
<evidence type="ECO:0007744" key="10">
    <source>
    </source>
</evidence>
<evidence type="ECO:0007744" key="11">
    <source>
    </source>
</evidence>
<evidence type="ECO:0007829" key="12">
    <source>
        <dbReference type="PDB" id="6URG"/>
    </source>
</evidence>
<evidence type="ECO:0007829" key="13">
    <source>
        <dbReference type="PDB" id="6V4X"/>
    </source>
</evidence>
<dbReference type="EMBL" id="AK001627">
    <property type="protein sequence ID" value="BAG50953.1"/>
    <property type="molecule type" value="mRNA"/>
</dbReference>
<dbReference type="EMBL" id="CH471061">
    <property type="protein sequence ID" value="EAW81480.1"/>
    <property type="molecule type" value="Genomic_DNA"/>
</dbReference>
<dbReference type="EMBL" id="BC070095">
    <property type="protein sequence ID" value="AAH70095.1"/>
    <property type="molecule type" value="mRNA"/>
</dbReference>
<dbReference type="EMBL" id="AB037788">
    <property type="protein sequence ID" value="BAA92605.1"/>
    <property type="molecule type" value="mRNA"/>
</dbReference>
<dbReference type="EMBL" id="AL442079">
    <property type="protein sequence ID" value="CAC09445.1"/>
    <property type="molecule type" value="mRNA"/>
</dbReference>
<dbReference type="CCDS" id="CCDS9902.1"/>
<dbReference type="RefSeq" id="NP_001309201.1">
    <property type="nucleotide sequence ID" value="NM_001322272.2"/>
</dbReference>
<dbReference type="RefSeq" id="NP_059133.1">
    <property type="nucleotide sequence ID" value="NM_017437.3"/>
</dbReference>
<dbReference type="PDB" id="6URG">
    <property type="method" value="EM"/>
    <property type="resolution" value="3.00 A"/>
    <property type="chains" value="F=1-782"/>
</dbReference>
<dbReference type="PDB" id="6V4X">
    <property type="method" value="EM"/>
    <property type="resolution" value="3.20 A"/>
    <property type="chains" value="I=1-782"/>
</dbReference>
<dbReference type="PDBsum" id="6URG"/>
<dbReference type="PDBsum" id="6V4X"/>
<dbReference type="EMDB" id="EMD-14185"/>
<dbReference type="EMDB" id="EMD-20859"/>
<dbReference type="EMDB" id="EMD-20860"/>
<dbReference type="EMDB" id="EMD-21050"/>
<dbReference type="SMR" id="Q9P2I0"/>
<dbReference type="BioGRID" id="119826">
    <property type="interactions" value="186"/>
</dbReference>
<dbReference type="ComplexPortal" id="CPX-2694">
    <property type="entry name" value="Histone pre-RNA core cleavage complex"/>
</dbReference>
<dbReference type="ComplexPortal" id="CPX-2698">
    <property type="entry name" value="pre-mRNA cleavage and polyadenylation specificity factor complex"/>
</dbReference>
<dbReference type="CORUM" id="Q9P2I0"/>
<dbReference type="DIP" id="DIP-42500N"/>
<dbReference type="FunCoup" id="Q9P2I0">
    <property type="interactions" value="3793"/>
</dbReference>
<dbReference type="IntAct" id="Q9P2I0">
    <property type="interactions" value="59"/>
</dbReference>
<dbReference type="MINT" id="Q9P2I0"/>
<dbReference type="STRING" id="9606.ENSP00000298875"/>
<dbReference type="GlyGen" id="Q9P2I0">
    <property type="glycosylation" value="1 site, 1 O-linked glycan (1 site)"/>
</dbReference>
<dbReference type="iPTMnet" id="Q9P2I0"/>
<dbReference type="PhosphoSitePlus" id="Q9P2I0"/>
<dbReference type="SwissPalm" id="Q9P2I0"/>
<dbReference type="BioMuta" id="CPSF2"/>
<dbReference type="DMDM" id="51338827"/>
<dbReference type="jPOST" id="Q9P2I0"/>
<dbReference type="MassIVE" id="Q9P2I0"/>
<dbReference type="PaxDb" id="9606-ENSP00000298875"/>
<dbReference type="PeptideAtlas" id="Q9P2I0"/>
<dbReference type="ProteomicsDB" id="83819"/>
<dbReference type="Pumba" id="Q9P2I0"/>
<dbReference type="Antibodypedia" id="81">
    <property type="antibodies" value="121 antibodies from 25 providers"/>
</dbReference>
<dbReference type="DNASU" id="53981"/>
<dbReference type="Ensembl" id="ENST00000298875.9">
    <property type="protein sequence ID" value="ENSP00000298875.4"/>
    <property type="gene ID" value="ENSG00000165934.13"/>
</dbReference>
<dbReference type="GeneID" id="53981"/>
<dbReference type="KEGG" id="hsa:53981"/>
<dbReference type="MANE-Select" id="ENST00000298875.9">
    <property type="protein sequence ID" value="ENSP00000298875.4"/>
    <property type="RefSeq nucleotide sequence ID" value="NM_017437.3"/>
    <property type="RefSeq protein sequence ID" value="NP_059133.1"/>
</dbReference>
<dbReference type="UCSC" id="uc001yah.3">
    <property type="organism name" value="human"/>
</dbReference>
<dbReference type="AGR" id="HGNC:2325"/>
<dbReference type="CTD" id="53981"/>
<dbReference type="DisGeNET" id="53981"/>
<dbReference type="GeneCards" id="CPSF2"/>
<dbReference type="HGNC" id="HGNC:2325">
    <property type="gene designation" value="CPSF2"/>
</dbReference>
<dbReference type="HPA" id="ENSG00000165934">
    <property type="expression patterns" value="Low tissue specificity"/>
</dbReference>
<dbReference type="MIM" id="606028">
    <property type="type" value="gene"/>
</dbReference>
<dbReference type="neXtProt" id="NX_Q9P2I0"/>
<dbReference type="OpenTargets" id="ENSG00000165934"/>
<dbReference type="PharmGKB" id="PA26842"/>
<dbReference type="VEuPathDB" id="HostDB:ENSG00000165934"/>
<dbReference type="eggNOG" id="KOG1135">
    <property type="taxonomic scope" value="Eukaryota"/>
</dbReference>
<dbReference type="GeneTree" id="ENSGT00910000144260"/>
<dbReference type="HOGENOM" id="CLU_002227_1_1_1"/>
<dbReference type="InParanoid" id="Q9P2I0"/>
<dbReference type="OMA" id="QSRHNME"/>
<dbReference type="OrthoDB" id="64353at2759"/>
<dbReference type="PAN-GO" id="Q9P2I0">
    <property type="GO annotations" value="5 GO annotations based on evolutionary models"/>
</dbReference>
<dbReference type="PhylomeDB" id="Q9P2I0"/>
<dbReference type="TreeFam" id="TF106131"/>
<dbReference type="PathwayCommons" id="Q9P2I0"/>
<dbReference type="Reactome" id="R-HSA-159231">
    <property type="pathway name" value="Transport of Mature mRNA Derived from an Intronless Transcript"/>
</dbReference>
<dbReference type="Reactome" id="R-HSA-72187">
    <property type="pathway name" value="mRNA 3'-end processing"/>
</dbReference>
<dbReference type="Reactome" id="R-HSA-72203">
    <property type="pathway name" value="Processing of Capped Intron-Containing Pre-mRNA"/>
</dbReference>
<dbReference type="Reactome" id="R-HSA-73856">
    <property type="pathway name" value="RNA Polymerase II Transcription Termination"/>
</dbReference>
<dbReference type="Reactome" id="R-HSA-77595">
    <property type="pathway name" value="Processing of Intronless Pre-mRNAs"/>
</dbReference>
<dbReference type="SignaLink" id="Q9P2I0"/>
<dbReference type="SIGNOR" id="Q9P2I0"/>
<dbReference type="BioGRID-ORCS" id="53981">
    <property type="hits" value="823 hits in 1174 CRISPR screens"/>
</dbReference>
<dbReference type="CD-CODE" id="232F8A39">
    <property type="entry name" value="P-body"/>
</dbReference>
<dbReference type="CD-CODE" id="24B72B50">
    <property type="entry name" value="Histone Locus Body"/>
</dbReference>
<dbReference type="CD-CODE" id="6F9FB6EF">
    <property type="entry name" value="Cleavage body"/>
</dbReference>
<dbReference type="ChiTaRS" id="CPSF2">
    <property type="organism name" value="human"/>
</dbReference>
<dbReference type="GeneWiki" id="CPSF2"/>
<dbReference type="GenomeRNAi" id="53981"/>
<dbReference type="Pharos" id="Q9P2I0">
    <property type="development level" value="Tbio"/>
</dbReference>
<dbReference type="PRO" id="PR:Q9P2I0"/>
<dbReference type="Proteomes" id="UP000005640">
    <property type="component" value="Chromosome 14"/>
</dbReference>
<dbReference type="RNAct" id="Q9P2I0">
    <property type="molecule type" value="protein"/>
</dbReference>
<dbReference type="Bgee" id="ENSG00000165934">
    <property type="expression patterns" value="Expressed in buccal mucosa cell and 196 other cell types or tissues"/>
</dbReference>
<dbReference type="ExpressionAtlas" id="Q9P2I0">
    <property type="expression patterns" value="baseline and differential"/>
</dbReference>
<dbReference type="GO" id="GO:0098978">
    <property type="term" value="C:glutamatergic synapse"/>
    <property type="evidence" value="ECO:0007669"/>
    <property type="project" value="Ensembl"/>
</dbReference>
<dbReference type="GO" id="GO:0016020">
    <property type="term" value="C:membrane"/>
    <property type="evidence" value="ECO:0007005"/>
    <property type="project" value="UniProtKB"/>
</dbReference>
<dbReference type="GO" id="GO:0005847">
    <property type="term" value="C:mRNA cleavage and polyadenylation specificity factor complex"/>
    <property type="evidence" value="ECO:0000314"/>
    <property type="project" value="UniProtKB"/>
</dbReference>
<dbReference type="GO" id="GO:0005654">
    <property type="term" value="C:nucleoplasm"/>
    <property type="evidence" value="ECO:0000304"/>
    <property type="project" value="Reactome"/>
</dbReference>
<dbReference type="GO" id="GO:0098794">
    <property type="term" value="C:postsynapse"/>
    <property type="evidence" value="ECO:0007669"/>
    <property type="project" value="Ensembl"/>
</dbReference>
<dbReference type="GO" id="GO:0003723">
    <property type="term" value="F:RNA binding"/>
    <property type="evidence" value="ECO:0000318"/>
    <property type="project" value="GO_Central"/>
</dbReference>
<dbReference type="GO" id="GO:0006398">
    <property type="term" value="P:mRNA 3'-end processing by stem-loop binding and cleavage"/>
    <property type="evidence" value="ECO:0000314"/>
    <property type="project" value="UniProtKB"/>
</dbReference>
<dbReference type="CDD" id="cd16293">
    <property type="entry name" value="CPSF2-like_MBL-fold"/>
    <property type="match status" value="1"/>
</dbReference>
<dbReference type="FunFam" id="3.60.15.10:FF:000008">
    <property type="entry name" value="Cleavage and polyadenylation specificity factor subunit 2"/>
    <property type="match status" value="1"/>
</dbReference>
<dbReference type="Gene3D" id="3.60.15.10">
    <property type="entry name" value="Ribonuclease Z/Hydroxyacylglutathione hydrolase-like"/>
    <property type="match status" value="1"/>
</dbReference>
<dbReference type="InterPro" id="IPR022712">
    <property type="entry name" value="Beta_Casp"/>
</dbReference>
<dbReference type="InterPro" id="IPR027075">
    <property type="entry name" value="CPSF2"/>
</dbReference>
<dbReference type="InterPro" id="IPR025069">
    <property type="entry name" value="Cpsf2_C"/>
</dbReference>
<dbReference type="InterPro" id="IPR035639">
    <property type="entry name" value="CPSF2_MBL"/>
</dbReference>
<dbReference type="InterPro" id="IPR001279">
    <property type="entry name" value="Metallo-B-lactamas"/>
</dbReference>
<dbReference type="InterPro" id="IPR036866">
    <property type="entry name" value="RibonucZ/Hydroxyglut_hydro"/>
</dbReference>
<dbReference type="InterPro" id="IPR011108">
    <property type="entry name" value="RMMBL"/>
</dbReference>
<dbReference type="PANTHER" id="PTHR45922">
    <property type="entry name" value="CLEAVAGE AND POLYADENYLATION SPECIFICITY FACTOR SUBUNIT 2"/>
    <property type="match status" value="1"/>
</dbReference>
<dbReference type="PANTHER" id="PTHR45922:SF1">
    <property type="entry name" value="CLEAVAGE AND POLYADENYLATION SPECIFICITY FACTOR SUBUNIT 2"/>
    <property type="match status" value="1"/>
</dbReference>
<dbReference type="Pfam" id="PF10996">
    <property type="entry name" value="Beta-Casp"/>
    <property type="match status" value="1"/>
</dbReference>
<dbReference type="Pfam" id="PF13299">
    <property type="entry name" value="CPSF100_C"/>
    <property type="match status" value="1"/>
</dbReference>
<dbReference type="Pfam" id="PF16661">
    <property type="entry name" value="Lactamase_B_6"/>
    <property type="match status" value="1"/>
</dbReference>
<dbReference type="Pfam" id="PF07521">
    <property type="entry name" value="RMMBL"/>
    <property type="match status" value="1"/>
</dbReference>
<dbReference type="SMART" id="SM01027">
    <property type="entry name" value="Beta-Casp"/>
    <property type="match status" value="1"/>
</dbReference>
<dbReference type="SMART" id="SM00849">
    <property type="entry name" value="Lactamase_B"/>
    <property type="match status" value="1"/>
</dbReference>
<dbReference type="SUPFAM" id="SSF56281">
    <property type="entry name" value="Metallo-hydrolase/oxidoreductase"/>
    <property type="match status" value="1"/>
</dbReference>
<feature type="chain" id="PRO_0000074393" description="Cleavage and polyadenylation specificity factor subunit 2">
    <location>
        <begin position="1"/>
        <end position="782"/>
    </location>
</feature>
<feature type="region of interest" description="Disordered" evidence="2">
    <location>
        <begin position="407"/>
        <end position="449"/>
    </location>
</feature>
<feature type="compositionally biased region" description="Basic and acidic residues" evidence="2">
    <location>
        <begin position="407"/>
        <end position="416"/>
    </location>
</feature>
<feature type="compositionally biased region" description="Acidic residues" evidence="2">
    <location>
        <begin position="417"/>
        <end position="430"/>
    </location>
</feature>
<feature type="compositionally biased region" description="Basic and acidic residues" evidence="2">
    <location>
        <begin position="439"/>
        <end position="449"/>
    </location>
</feature>
<feature type="modified residue" description="Phosphoserine" evidence="8 9 10 11">
    <location>
        <position position="419"/>
    </location>
</feature>
<feature type="modified residue" description="Phosphoserine" evidence="8 9 10 11">
    <location>
        <position position="420"/>
    </location>
</feature>
<feature type="modified residue" description="Phosphoserine" evidence="7 8 9 10 11">
    <location>
        <position position="423"/>
    </location>
</feature>
<feature type="modified residue" description="Phosphoserine" evidence="8">
    <location>
        <position position="660"/>
    </location>
</feature>
<feature type="mutagenesis site" description="Inhibits histone 3'-end processing." evidence="4">
    <original>H</original>
    <variation>A</variation>
    <location>
        <position position="67"/>
    </location>
</feature>
<feature type="mutagenesis site" description="Does not inhibit histone 3'-end processing." evidence="4">
    <original>D</original>
    <variation>A</variation>
    <location>
        <position position="289"/>
    </location>
</feature>
<feature type="mutagenesis site" description="Inhibits histone 3'-end processing." evidence="4">
    <original>R</original>
    <variation>A</variation>
    <location>
        <position position="543"/>
    </location>
</feature>
<feature type="sequence conflict" description="In Ref. 3; AAH70095." evidence="6" ref="3">
    <original>D</original>
    <variation>G</variation>
    <location>
        <position position="289"/>
    </location>
</feature>
<feature type="sequence conflict" description="In Ref. 3; AAH70095." evidence="6" ref="3">
    <original>K</original>
    <variation>R</variation>
    <location>
        <position position="654"/>
    </location>
</feature>
<feature type="strand" evidence="13">
    <location>
        <begin position="5"/>
        <end position="11"/>
    </location>
</feature>
<feature type="strand" evidence="13">
    <location>
        <begin position="19"/>
        <end position="27"/>
    </location>
</feature>
<feature type="turn" evidence="13">
    <location>
        <begin position="43"/>
        <end position="51"/>
    </location>
</feature>
<feature type="strand" evidence="13">
    <location>
        <begin position="52"/>
        <end position="54"/>
    </location>
</feature>
<feature type="strand" evidence="13">
    <location>
        <begin position="62"/>
        <end position="64"/>
    </location>
</feature>
<feature type="helix" evidence="13">
    <location>
        <begin position="65"/>
        <end position="68"/>
    </location>
</feature>
<feature type="helix" evidence="13">
    <location>
        <begin position="71"/>
        <end position="76"/>
    </location>
</feature>
<feature type="strand" evidence="13">
    <location>
        <begin position="84"/>
        <end position="87"/>
    </location>
</feature>
<feature type="helix" evidence="13">
    <location>
        <begin position="88"/>
        <end position="106"/>
    </location>
</feature>
<feature type="helix" evidence="13">
    <location>
        <begin position="116"/>
        <end position="122"/>
    </location>
</feature>
<feature type="strand" evidence="13">
    <location>
        <begin position="127"/>
        <end position="129"/>
    </location>
</feature>
<feature type="strand" evidence="13">
    <location>
        <begin position="158"/>
        <end position="160"/>
    </location>
</feature>
<feature type="strand" evidence="13">
    <location>
        <begin position="165"/>
        <end position="167"/>
    </location>
</feature>
<feature type="strand" evidence="13">
    <location>
        <begin position="198"/>
        <end position="200"/>
    </location>
</feature>
<feature type="helix" evidence="13">
    <location>
        <begin position="212"/>
        <end position="228"/>
    </location>
</feature>
<feature type="strand" evidence="13">
    <location>
        <begin position="233"/>
        <end position="236"/>
    </location>
</feature>
<feature type="strand" evidence="13">
    <location>
        <begin position="239"/>
        <end position="242"/>
    </location>
</feature>
<feature type="helix" evidence="13">
    <location>
        <begin position="243"/>
        <end position="255"/>
    </location>
</feature>
<feature type="strand" evidence="13">
    <location>
        <begin position="256"/>
        <end position="259"/>
    </location>
</feature>
<feature type="helix" evidence="13">
    <location>
        <begin position="261"/>
        <end position="263"/>
    </location>
</feature>
<feature type="strand" evidence="13">
    <location>
        <begin position="266"/>
        <end position="269"/>
    </location>
</feature>
<feature type="helix" evidence="13">
    <location>
        <begin position="273"/>
        <end position="280"/>
    </location>
</feature>
<feature type="helix" evidence="13">
    <location>
        <begin position="289"/>
        <end position="296"/>
    </location>
</feature>
<feature type="strand" evidence="13">
    <location>
        <begin position="306"/>
        <end position="313"/>
    </location>
</feature>
<feature type="helix" evidence="13">
    <location>
        <begin position="314"/>
        <end position="317"/>
    </location>
</feature>
<feature type="strand" evidence="13">
    <location>
        <begin position="318"/>
        <end position="320"/>
    </location>
</feature>
<feature type="strand" evidence="13">
    <location>
        <begin position="325"/>
        <end position="329"/>
    </location>
</feature>
<feature type="strand" evidence="13">
    <location>
        <begin position="331"/>
        <end position="335"/>
    </location>
</feature>
<feature type="helix" evidence="13">
    <location>
        <begin position="337"/>
        <end position="344"/>
    </location>
</feature>
<feature type="strand" evidence="13">
    <location>
        <begin position="352"/>
        <end position="355"/>
    </location>
</feature>
<feature type="strand" evidence="13">
    <location>
        <begin position="361"/>
        <end position="363"/>
    </location>
</feature>
<feature type="helix" evidence="13">
    <location>
        <begin position="364"/>
        <end position="369"/>
    </location>
</feature>
<feature type="strand" evidence="13">
    <location>
        <begin position="377"/>
        <end position="385"/>
    </location>
</feature>
<feature type="strand" evidence="12">
    <location>
        <begin position="475"/>
        <end position="478"/>
    </location>
</feature>
<feature type="strand" evidence="13">
    <location>
        <begin position="520"/>
        <end position="528"/>
    </location>
</feature>
<feature type="strand" evidence="13">
    <location>
        <begin position="533"/>
        <end position="537"/>
    </location>
</feature>
<feature type="turn" evidence="13">
    <location>
        <begin position="546"/>
        <end position="548"/>
    </location>
</feature>
<feature type="helix" evidence="13">
    <location>
        <begin position="549"/>
        <end position="555"/>
    </location>
</feature>
<feature type="strand" evidence="13">
    <location>
        <begin position="559"/>
        <end position="563"/>
    </location>
</feature>
<feature type="helix" evidence="13">
    <location>
        <begin position="568"/>
        <end position="578"/>
    </location>
</feature>
<feature type="strand" evidence="13">
    <location>
        <begin position="606"/>
        <end position="610"/>
    </location>
</feature>
<feature type="strand" evidence="13">
    <location>
        <begin position="615"/>
        <end position="617"/>
    </location>
</feature>
<feature type="strand" evidence="13">
    <location>
        <begin position="622"/>
        <end position="624"/>
    </location>
</feature>
<feature type="strand" evidence="13">
    <location>
        <begin position="630"/>
        <end position="634"/>
    </location>
</feature>
<comment type="function">
    <text evidence="3 4">Component of the cleavage and polyadenylation specificity factor (CPSF) complex that play a key role in pre-mRNA 3'-end formation, recognizing the AAUAAA signal sequence and interacting with poly(A) polymerase and other factors to bring about cleavage and poly(A) addition. Involved in the histone 3' end pre-mRNA processing.</text>
</comment>
<comment type="subunit">
    <text evidence="1 3 4 5">Component of the cleavage and polyadenylation specificity factor (CPSF) complex, composed of CPSF1, CPSF2, CPSF3, CPSF4 and FIP1L1. Interacts with CPSF3, CSTF2 and SYMPK. Interacts with ZC3H3 (By similarity).</text>
</comment>
<comment type="interaction">
    <interactant intactId="EBI-1043224">
        <id>Q9P2I0</id>
    </interactant>
    <interactant intactId="EBI-711360">
        <id>P33240</id>
        <label>CSTF2</label>
    </interactant>
    <organismsDiffer>false</organismsDiffer>
    <experiments>2</experiments>
</comment>
<comment type="interaction">
    <interactant intactId="EBI-1043224">
        <id>Q9P2I0</id>
    </interactant>
    <interactant intactId="EBI-1051992">
        <id>Q92797</id>
        <label>SYMPK</label>
    </interactant>
    <organismsDiffer>false</organismsDiffer>
    <experiments>7</experiments>
</comment>
<comment type="subcellular location">
    <subcellularLocation>
        <location evidence="6">Nucleus</location>
    </subcellularLocation>
</comment>
<comment type="similarity">
    <text evidence="6">Belongs to the metallo-beta-lactamase superfamily. RNA-metabolizing metallo-beta-lactamase-like family. CPSF2/YSH1 subfamily.</text>
</comment>
<proteinExistence type="evidence at protein level"/>
<accession>Q9P2I0</accession>
<accession>B3KME1</accession>
<accession>Q6NSJ1</accession>
<accession>Q9H3W7</accession>
<organism>
    <name type="scientific">Homo sapiens</name>
    <name type="common">Human</name>
    <dbReference type="NCBI Taxonomy" id="9606"/>
    <lineage>
        <taxon>Eukaryota</taxon>
        <taxon>Metazoa</taxon>
        <taxon>Chordata</taxon>
        <taxon>Craniata</taxon>
        <taxon>Vertebrata</taxon>
        <taxon>Euteleostomi</taxon>
        <taxon>Mammalia</taxon>
        <taxon>Eutheria</taxon>
        <taxon>Euarchontoglires</taxon>
        <taxon>Primates</taxon>
        <taxon>Haplorrhini</taxon>
        <taxon>Catarrhini</taxon>
        <taxon>Hominidae</taxon>
        <taxon>Homo</taxon>
    </lineage>
</organism>
<protein>
    <recommendedName>
        <fullName>Cleavage and polyadenylation specificity factor subunit 2</fullName>
    </recommendedName>
    <alternativeName>
        <fullName>Cleavage and polyadenylation specificity factor 100 kDa subunit</fullName>
        <shortName>CPSF 100 kDa subunit</shortName>
    </alternativeName>
</protein>
<reference key="1">
    <citation type="journal article" date="2004" name="Nat. Genet.">
        <title>Complete sequencing and characterization of 21,243 full-length human cDNAs.</title>
        <authorList>
            <person name="Ota T."/>
            <person name="Suzuki Y."/>
            <person name="Nishikawa T."/>
            <person name="Otsuki T."/>
            <person name="Sugiyama T."/>
            <person name="Irie R."/>
            <person name="Wakamatsu A."/>
            <person name="Hayashi K."/>
            <person name="Sato H."/>
            <person name="Nagai K."/>
            <person name="Kimura K."/>
            <person name="Makita H."/>
            <person name="Sekine M."/>
            <person name="Obayashi M."/>
            <person name="Nishi T."/>
            <person name="Shibahara T."/>
            <person name="Tanaka T."/>
            <person name="Ishii S."/>
            <person name="Yamamoto J."/>
            <person name="Saito K."/>
            <person name="Kawai Y."/>
            <person name="Isono Y."/>
            <person name="Nakamura Y."/>
            <person name="Nagahari K."/>
            <person name="Murakami K."/>
            <person name="Yasuda T."/>
            <person name="Iwayanagi T."/>
            <person name="Wagatsuma M."/>
            <person name="Shiratori A."/>
            <person name="Sudo H."/>
            <person name="Hosoiri T."/>
            <person name="Kaku Y."/>
            <person name="Kodaira H."/>
            <person name="Kondo H."/>
            <person name="Sugawara M."/>
            <person name="Takahashi M."/>
            <person name="Kanda K."/>
            <person name="Yokoi T."/>
            <person name="Furuya T."/>
            <person name="Kikkawa E."/>
            <person name="Omura Y."/>
            <person name="Abe K."/>
            <person name="Kamihara K."/>
            <person name="Katsuta N."/>
            <person name="Sato K."/>
            <person name="Tanikawa M."/>
            <person name="Yamazaki M."/>
            <person name="Ninomiya K."/>
            <person name="Ishibashi T."/>
            <person name="Yamashita H."/>
            <person name="Murakawa K."/>
            <person name="Fujimori K."/>
            <person name="Tanai H."/>
            <person name="Kimata M."/>
            <person name="Watanabe M."/>
            <person name="Hiraoka S."/>
            <person name="Chiba Y."/>
            <person name="Ishida S."/>
            <person name="Ono Y."/>
            <person name="Takiguchi S."/>
            <person name="Watanabe S."/>
            <person name="Yosida M."/>
            <person name="Hotuta T."/>
            <person name="Kusano J."/>
            <person name="Kanehori K."/>
            <person name="Takahashi-Fujii A."/>
            <person name="Hara H."/>
            <person name="Tanase T.-O."/>
            <person name="Nomura Y."/>
            <person name="Togiya S."/>
            <person name="Komai F."/>
            <person name="Hara R."/>
            <person name="Takeuchi K."/>
            <person name="Arita M."/>
            <person name="Imose N."/>
            <person name="Musashino K."/>
            <person name="Yuuki H."/>
            <person name="Oshima A."/>
            <person name="Sasaki N."/>
            <person name="Aotsuka S."/>
            <person name="Yoshikawa Y."/>
            <person name="Matsunawa H."/>
            <person name="Ichihara T."/>
            <person name="Shiohata N."/>
            <person name="Sano S."/>
            <person name="Moriya S."/>
            <person name="Momiyama H."/>
            <person name="Satoh N."/>
            <person name="Takami S."/>
            <person name="Terashima Y."/>
            <person name="Suzuki O."/>
            <person name="Nakagawa S."/>
            <person name="Senoh A."/>
            <person name="Mizoguchi H."/>
            <person name="Goto Y."/>
            <person name="Shimizu F."/>
            <person name="Wakebe H."/>
            <person name="Hishigaki H."/>
            <person name="Watanabe T."/>
            <person name="Sugiyama A."/>
            <person name="Takemoto M."/>
            <person name="Kawakami B."/>
            <person name="Yamazaki M."/>
            <person name="Watanabe K."/>
            <person name="Kumagai A."/>
            <person name="Itakura S."/>
            <person name="Fukuzumi Y."/>
            <person name="Fujimori Y."/>
            <person name="Komiyama M."/>
            <person name="Tashiro H."/>
            <person name="Tanigami A."/>
            <person name="Fujiwara T."/>
            <person name="Ono T."/>
            <person name="Yamada K."/>
            <person name="Fujii Y."/>
            <person name="Ozaki K."/>
            <person name="Hirao M."/>
            <person name="Ohmori Y."/>
            <person name="Kawabata A."/>
            <person name="Hikiji T."/>
            <person name="Kobatake N."/>
            <person name="Inagaki H."/>
            <person name="Ikema Y."/>
            <person name="Okamoto S."/>
            <person name="Okitani R."/>
            <person name="Kawakami T."/>
            <person name="Noguchi S."/>
            <person name="Itoh T."/>
            <person name="Shigeta K."/>
            <person name="Senba T."/>
            <person name="Matsumura K."/>
            <person name="Nakajima Y."/>
            <person name="Mizuno T."/>
            <person name="Morinaga M."/>
            <person name="Sasaki M."/>
            <person name="Togashi T."/>
            <person name="Oyama M."/>
            <person name="Hata H."/>
            <person name="Watanabe M."/>
            <person name="Komatsu T."/>
            <person name="Mizushima-Sugano J."/>
            <person name="Satoh T."/>
            <person name="Shirai Y."/>
            <person name="Takahashi Y."/>
            <person name="Nakagawa K."/>
            <person name="Okumura K."/>
            <person name="Nagase T."/>
            <person name="Nomura N."/>
            <person name="Kikuchi H."/>
            <person name="Masuho Y."/>
            <person name="Yamashita R."/>
            <person name="Nakai K."/>
            <person name="Yada T."/>
            <person name="Nakamura Y."/>
            <person name="Ohara O."/>
            <person name="Isogai T."/>
            <person name="Sugano S."/>
        </authorList>
    </citation>
    <scope>NUCLEOTIDE SEQUENCE [LARGE SCALE MRNA]</scope>
</reference>
<reference key="2">
    <citation type="submission" date="2005-07" db="EMBL/GenBank/DDBJ databases">
        <authorList>
            <person name="Mural R.J."/>
            <person name="Istrail S."/>
            <person name="Sutton G.G."/>
            <person name="Florea L."/>
            <person name="Halpern A.L."/>
            <person name="Mobarry C.M."/>
            <person name="Lippert R."/>
            <person name="Walenz B."/>
            <person name="Shatkay H."/>
            <person name="Dew I."/>
            <person name="Miller J.R."/>
            <person name="Flanigan M.J."/>
            <person name="Edwards N.J."/>
            <person name="Bolanos R."/>
            <person name="Fasulo D."/>
            <person name="Halldorsson B.V."/>
            <person name="Hannenhalli S."/>
            <person name="Turner R."/>
            <person name="Yooseph S."/>
            <person name="Lu F."/>
            <person name="Nusskern D.R."/>
            <person name="Shue B.C."/>
            <person name="Zheng X.H."/>
            <person name="Zhong F."/>
            <person name="Delcher A.L."/>
            <person name="Huson D.H."/>
            <person name="Kravitz S.A."/>
            <person name="Mouchard L."/>
            <person name="Reinert K."/>
            <person name="Remington K.A."/>
            <person name="Clark A.G."/>
            <person name="Waterman M.S."/>
            <person name="Eichler E.E."/>
            <person name="Adams M.D."/>
            <person name="Hunkapiller M.W."/>
            <person name="Myers E.W."/>
            <person name="Venter J.C."/>
        </authorList>
    </citation>
    <scope>NUCLEOTIDE SEQUENCE [LARGE SCALE GENOMIC DNA]</scope>
</reference>
<reference key="3">
    <citation type="journal article" date="2004" name="Genome Res.">
        <title>The status, quality, and expansion of the NIH full-length cDNA project: the Mammalian Gene Collection (MGC).</title>
        <authorList>
            <consortium name="The MGC Project Team"/>
        </authorList>
    </citation>
    <scope>NUCLEOTIDE SEQUENCE [LARGE SCALE MRNA]</scope>
    <source>
        <tissue>Testis</tissue>
    </source>
</reference>
<reference key="4">
    <citation type="journal article" date="2000" name="DNA Res.">
        <title>Prediction of the coding sequences of unidentified human genes. XVI. The complete sequences of 150 new cDNA clones from brain which code for large proteins in vitro.</title>
        <authorList>
            <person name="Nagase T."/>
            <person name="Kikuno R."/>
            <person name="Ishikawa K."/>
            <person name="Hirosawa M."/>
            <person name="Ohara O."/>
        </authorList>
    </citation>
    <scope>NUCLEOTIDE SEQUENCE [LARGE SCALE MRNA] OF 204-782</scope>
    <source>
        <tissue>Brain</tissue>
    </source>
</reference>
<reference key="5">
    <citation type="journal article" date="2007" name="BMC Genomics">
        <title>The full-ORF clone resource of the German cDNA consortium.</title>
        <authorList>
            <person name="Bechtel S."/>
            <person name="Rosenfelder H."/>
            <person name="Duda A."/>
            <person name="Schmidt C.P."/>
            <person name="Ernst U."/>
            <person name="Wellenreuther R."/>
            <person name="Mehrle A."/>
            <person name="Schuster C."/>
            <person name="Bahr A."/>
            <person name="Bloecker H."/>
            <person name="Heubner D."/>
            <person name="Hoerlein A."/>
            <person name="Michel G."/>
            <person name="Wedler H."/>
            <person name="Koehrer K."/>
            <person name="Ottenwaelder B."/>
            <person name="Poustka A."/>
            <person name="Wiemann S."/>
            <person name="Schupp I."/>
        </authorList>
    </citation>
    <scope>NUCLEOTIDE SEQUENCE [LARGE SCALE MRNA] OF 279-782</scope>
    <source>
        <tissue>Lymph node</tissue>
    </source>
</reference>
<reference key="6">
    <citation type="journal article" date="2004" name="EMBO J.">
        <title>Human Fip1 is a subunit of CPSF that binds to U-rich RNA elements and stimulates poly(A) polymerase.</title>
        <authorList>
            <person name="Kaufmann I."/>
            <person name="Martin G."/>
            <person name="Friedlein A."/>
            <person name="Langen H."/>
            <person name="Keller W."/>
        </authorList>
    </citation>
    <scope>FUNCTION IN PRE-MRNA 3'-END PROCESSING</scope>
    <scope>IDENTIFICATION IN THE CPSF COMPLEX</scope>
</reference>
<reference key="7">
    <citation type="journal article" date="2006" name="Cell">
        <title>Global, in vivo, and site-specific phosphorylation dynamics in signaling networks.</title>
        <authorList>
            <person name="Olsen J.V."/>
            <person name="Blagoev B."/>
            <person name="Gnad F."/>
            <person name="Macek B."/>
            <person name="Kumar C."/>
            <person name="Mortensen P."/>
            <person name="Mann M."/>
        </authorList>
    </citation>
    <scope>PHOSPHORYLATION [LARGE SCALE ANALYSIS] AT SER-423</scope>
    <scope>IDENTIFICATION BY MASS SPECTROMETRY [LARGE SCALE ANALYSIS]</scope>
    <source>
        <tissue>Cervix carcinoma</tissue>
    </source>
</reference>
<reference key="8">
    <citation type="journal article" date="2008" name="EMBO Rep.">
        <title>Conserved motifs in both CPSF73 and CPSF100 are required to assemble the active endonuclease for histone mRNA 3'-end maturation.</title>
        <authorList>
            <person name="Kolev N.G."/>
            <person name="Yario T.A."/>
            <person name="Benson E."/>
            <person name="Steitz J.A."/>
        </authorList>
    </citation>
    <scope>FUNCTION</scope>
    <scope>INTERACTION WITH CPSF3; CSTF2 AND SYMPK</scope>
    <scope>MUTAGENESIS OF HIS-67; ASP-289 AND ARG-543</scope>
</reference>
<reference key="9">
    <citation type="journal article" date="2008" name="Proc. Natl. Acad. Sci. U.S.A.">
        <title>A quantitative atlas of mitotic phosphorylation.</title>
        <authorList>
            <person name="Dephoure N."/>
            <person name="Zhou C."/>
            <person name="Villen J."/>
            <person name="Beausoleil S.A."/>
            <person name="Bakalarski C.E."/>
            <person name="Elledge S.J."/>
            <person name="Gygi S.P."/>
        </authorList>
    </citation>
    <scope>PHOSPHORYLATION [LARGE SCALE ANALYSIS] AT SER-419; SER-420; SER-423 AND SER-660</scope>
    <scope>IDENTIFICATION BY MASS SPECTROMETRY [LARGE SCALE ANALYSIS]</scope>
    <source>
        <tissue>Cervix carcinoma</tissue>
    </source>
</reference>
<reference key="10">
    <citation type="journal article" date="2009" name="Anal. Chem.">
        <title>Lys-N and trypsin cover complementary parts of the phosphoproteome in a refined SCX-based approach.</title>
        <authorList>
            <person name="Gauci S."/>
            <person name="Helbig A.O."/>
            <person name="Slijper M."/>
            <person name="Krijgsveld J."/>
            <person name="Heck A.J."/>
            <person name="Mohammed S."/>
        </authorList>
    </citation>
    <scope>IDENTIFICATION BY MASS SPECTROMETRY [LARGE SCALE ANALYSIS]</scope>
</reference>
<reference key="11">
    <citation type="journal article" date="2009" name="Sci. Signal.">
        <title>Quantitative phosphoproteomic analysis of T cell receptor signaling reveals system-wide modulation of protein-protein interactions.</title>
        <authorList>
            <person name="Mayya V."/>
            <person name="Lundgren D.H."/>
            <person name="Hwang S.-I."/>
            <person name="Rezaul K."/>
            <person name="Wu L."/>
            <person name="Eng J.K."/>
            <person name="Rodionov V."/>
            <person name="Han D.K."/>
        </authorList>
    </citation>
    <scope>PHOSPHORYLATION [LARGE SCALE ANALYSIS] AT SER-419; SER-420 AND SER-423</scope>
    <scope>IDENTIFICATION BY MASS SPECTROMETRY [LARGE SCALE ANALYSIS]</scope>
    <source>
        <tissue>Leukemic T-cell</tissue>
    </source>
</reference>
<reference key="12">
    <citation type="journal article" date="2010" name="EMBO J.">
        <title>The poly A polymerase Star-PAP controls 3'-end cleavage by promoting CPSF interaction and specificity toward the pre-mRNA.</title>
        <authorList>
            <person name="Laishram R.S."/>
            <person name="Anderson R.A."/>
        </authorList>
    </citation>
    <scope>IDENTIFICATION IN THE CPSF COMPLEX</scope>
</reference>
<reference key="13">
    <citation type="journal article" date="2011" name="BMC Syst. Biol.">
        <title>Initial characterization of the human central proteome.</title>
        <authorList>
            <person name="Burkard T.R."/>
            <person name="Planyavsky M."/>
            <person name="Kaupe I."/>
            <person name="Breitwieser F.P."/>
            <person name="Buerckstuemmer T."/>
            <person name="Bennett K.L."/>
            <person name="Superti-Furga G."/>
            <person name="Colinge J."/>
        </authorList>
    </citation>
    <scope>IDENTIFICATION BY MASS SPECTROMETRY [LARGE SCALE ANALYSIS]</scope>
</reference>
<reference key="14">
    <citation type="journal article" date="2013" name="J. Proteome Res.">
        <title>Toward a comprehensive characterization of a human cancer cell phosphoproteome.</title>
        <authorList>
            <person name="Zhou H."/>
            <person name="Di Palma S."/>
            <person name="Preisinger C."/>
            <person name="Peng M."/>
            <person name="Polat A.N."/>
            <person name="Heck A.J."/>
            <person name="Mohammed S."/>
        </authorList>
    </citation>
    <scope>PHOSPHORYLATION [LARGE SCALE ANALYSIS] AT SER-419; SER-420 AND SER-423</scope>
    <scope>IDENTIFICATION BY MASS SPECTROMETRY [LARGE SCALE ANALYSIS]</scope>
    <source>
        <tissue>Cervix carcinoma</tissue>
    </source>
</reference>
<reference key="15">
    <citation type="journal article" date="2014" name="J. Proteomics">
        <title>An enzyme assisted RP-RPLC approach for in-depth analysis of human liver phosphoproteome.</title>
        <authorList>
            <person name="Bian Y."/>
            <person name="Song C."/>
            <person name="Cheng K."/>
            <person name="Dong M."/>
            <person name="Wang F."/>
            <person name="Huang J."/>
            <person name="Sun D."/>
            <person name="Wang L."/>
            <person name="Ye M."/>
            <person name="Zou H."/>
        </authorList>
    </citation>
    <scope>PHOSPHORYLATION [LARGE SCALE ANALYSIS] AT SER-419; SER-420 AND SER-423</scope>
    <scope>IDENTIFICATION BY MASS SPECTROMETRY [LARGE SCALE ANALYSIS]</scope>
    <source>
        <tissue>Liver</tissue>
    </source>
</reference>
<name>CPSF2_HUMAN</name>
<gene>
    <name type="primary">CPSF2</name>
    <name type="synonym">CPSF100</name>
    <name type="synonym">KIAA1367</name>
</gene>
<sequence length="782" mass="88487">MTSIIKLTTLSGVQEESALCYLLQVDEFRFLLDCGWDEHFSMDIIDSLRKHVHQIDAVLLSHPDPLHLGALPYAVGKLGLNCAIYATIPVYKMGQMFMYDLYQSRHNTEDFTLFTLDDVDAAFDKIQQLKFSQIVNLKGKGHGLSITPLPAGHMIGGTIWKIVKDGEEEIVYAVDFNHKREIHLNGCSLEMLSRPSLLITDSFNATYVQPRRKQRDEQLLTNVLETLRGDGNVLIAVDTAGRVLELAQLLDQIWRTKDAGLGVYSLALLNNVSYNVVEFSKSQVEWMSDKLMRCFEDKRNNPFQFRHLSLCHGLSDLARVPSPKVVLASQPDLECGFSRDLFIQWCQDPKNSIILTYRTTPGTLARFLIDNPSEKITEIELRKRVKLEGKELEEYLEKEKLKKEAAKKLEQSKEADIDSSDESDIEEDIDQPSAHKTKHDLMMKGEGSRKGSFFKQAKKSYPMFPAPEERIKWDEYGEIIKPEDFLVPELQATEEEKSKLESGLTNGDEPMDQDLSDVPTKCISTTESIEIKARVTYIDYEGRSDGDSIKKIINQMKPRQLIIVHGPPEASQDLAECCRAFGGKDIKVYMPKLHETVDATSETHIYQVRLKDSLVSSLQFCKAKDAELAWIDGVLDMRVSKVDTGVILEEGELKDDGEDSEMQVEAPSDSSVIAQQKAMKSLFGDDEKETGEESEIIPTLEPLPPHEVPGHQSVFMNEPRLSDFKQVLLREGIQAEFVGGVLVCNNQVAVRRTETGRIGLEGCLCQDFYRIRDLLYEQYAIV</sequence>